<evidence type="ECO:0000255" key="1">
    <source>
        <dbReference type="HAMAP-Rule" id="MF_00503"/>
    </source>
</evidence>
<evidence type="ECO:0000305" key="2"/>
<proteinExistence type="inferred from homology"/>
<accession>Q63UY3</accession>
<organism>
    <name type="scientific">Burkholderia pseudomallei (strain K96243)</name>
    <dbReference type="NCBI Taxonomy" id="272560"/>
    <lineage>
        <taxon>Bacteria</taxon>
        <taxon>Pseudomonadati</taxon>
        <taxon>Pseudomonadota</taxon>
        <taxon>Betaproteobacteria</taxon>
        <taxon>Burkholderiales</taxon>
        <taxon>Burkholderiaceae</taxon>
        <taxon>Burkholderia</taxon>
        <taxon>pseudomallei group</taxon>
    </lineage>
</organism>
<name>RL9_BURPS</name>
<gene>
    <name evidence="1" type="primary">rplI</name>
    <name type="ordered locus">BPSL1461</name>
</gene>
<dbReference type="EMBL" id="BX571965">
    <property type="protein sequence ID" value="CAH35463.1"/>
    <property type="molecule type" value="Genomic_DNA"/>
</dbReference>
<dbReference type="RefSeq" id="WP_004191711.1">
    <property type="nucleotide sequence ID" value="NZ_CP009538.1"/>
</dbReference>
<dbReference type="RefSeq" id="YP_108083.1">
    <property type="nucleotide sequence ID" value="NC_006350.1"/>
</dbReference>
<dbReference type="SMR" id="Q63UY3"/>
<dbReference type="STRING" id="272560.BPSL1461"/>
<dbReference type="GeneID" id="93060530"/>
<dbReference type="KEGG" id="bps:BPSL1461"/>
<dbReference type="PATRIC" id="fig|272560.51.peg.3490"/>
<dbReference type="eggNOG" id="COG0359">
    <property type="taxonomic scope" value="Bacteria"/>
</dbReference>
<dbReference type="Proteomes" id="UP000000605">
    <property type="component" value="Chromosome 1"/>
</dbReference>
<dbReference type="GO" id="GO:1990904">
    <property type="term" value="C:ribonucleoprotein complex"/>
    <property type="evidence" value="ECO:0007669"/>
    <property type="project" value="UniProtKB-KW"/>
</dbReference>
<dbReference type="GO" id="GO:0005840">
    <property type="term" value="C:ribosome"/>
    <property type="evidence" value="ECO:0007669"/>
    <property type="project" value="UniProtKB-KW"/>
</dbReference>
<dbReference type="GO" id="GO:0019843">
    <property type="term" value="F:rRNA binding"/>
    <property type="evidence" value="ECO:0007669"/>
    <property type="project" value="UniProtKB-UniRule"/>
</dbReference>
<dbReference type="GO" id="GO:0003735">
    <property type="term" value="F:structural constituent of ribosome"/>
    <property type="evidence" value="ECO:0007669"/>
    <property type="project" value="InterPro"/>
</dbReference>
<dbReference type="GO" id="GO:0006412">
    <property type="term" value="P:translation"/>
    <property type="evidence" value="ECO:0007669"/>
    <property type="project" value="UniProtKB-UniRule"/>
</dbReference>
<dbReference type="Gene3D" id="3.10.430.100">
    <property type="entry name" value="Ribosomal protein L9, C-terminal domain"/>
    <property type="match status" value="1"/>
</dbReference>
<dbReference type="Gene3D" id="3.40.5.10">
    <property type="entry name" value="Ribosomal protein L9, N-terminal domain"/>
    <property type="match status" value="1"/>
</dbReference>
<dbReference type="HAMAP" id="MF_00503">
    <property type="entry name" value="Ribosomal_bL9"/>
    <property type="match status" value="1"/>
</dbReference>
<dbReference type="InterPro" id="IPR000244">
    <property type="entry name" value="Ribosomal_bL9"/>
</dbReference>
<dbReference type="InterPro" id="IPR009027">
    <property type="entry name" value="Ribosomal_bL9/RNase_H1_N"/>
</dbReference>
<dbReference type="InterPro" id="IPR020594">
    <property type="entry name" value="Ribosomal_bL9_bac/chp"/>
</dbReference>
<dbReference type="InterPro" id="IPR020069">
    <property type="entry name" value="Ribosomal_bL9_C"/>
</dbReference>
<dbReference type="InterPro" id="IPR036791">
    <property type="entry name" value="Ribosomal_bL9_C_sf"/>
</dbReference>
<dbReference type="InterPro" id="IPR020070">
    <property type="entry name" value="Ribosomal_bL9_N"/>
</dbReference>
<dbReference type="InterPro" id="IPR036935">
    <property type="entry name" value="Ribosomal_bL9_N_sf"/>
</dbReference>
<dbReference type="NCBIfam" id="TIGR00158">
    <property type="entry name" value="L9"/>
    <property type="match status" value="1"/>
</dbReference>
<dbReference type="PANTHER" id="PTHR21368">
    <property type="entry name" value="50S RIBOSOMAL PROTEIN L9"/>
    <property type="match status" value="1"/>
</dbReference>
<dbReference type="Pfam" id="PF03948">
    <property type="entry name" value="Ribosomal_L9_C"/>
    <property type="match status" value="1"/>
</dbReference>
<dbReference type="Pfam" id="PF01281">
    <property type="entry name" value="Ribosomal_L9_N"/>
    <property type="match status" value="1"/>
</dbReference>
<dbReference type="SUPFAM" id="SSF55658">
    <property type="entry name" value="L9 N-domain-like"/>
    <property type="match status" value="1"/>
</dbReference>
<dbReference type="SUPFAM" id="SSF55653">
    <property type="entry name" value="Ribosomal protein L9 C-domain"/>
    <property type="match status" value="1"/>
</dbReference>
<dbReference type="PROSITE" id="PS00651">
    <property type="entry name" value="RIBOSOMAL_L9"/>
    <property type="match status" value="1"/>
</dbReference>
<sequence>MQIILLEKVANLGNLGDIVKVKDGYARNFLIPNRKARRATKDAIAEFEVRRAELEKVAAEKLAAAQAVGEKLNGQTFEITQKSGVDGRLFGSVTNGDVAELLKKAGYEIEKAQVRMPEGPLKMIGEHGVQVALHTDVVVDVTVNVIGDHA</sequence>
<keyword id="KW-1185">Reference proteome</keyword>
<keyword id="KW-0687">Ribonucleoprotein</keyword>
<keyword id="KW-0689">Ribosomal protein</keyword>
<keyword id="KW-0694">RNA-binding</keyword>
<keyword id="KW-0699">rRNA-binding</keyword>
<comment type="function">
    <text evidence="1">Binds to the 23S rRNA.</text>
</comment>
<comment type="similarity">
    <text evidence="1">Belongs to the bacterial ribosomal protein bL9 family.</text>
</comment>
<feature type="chain" id="PRO_0000236498" description="Large ribosomal subunit protein bL9">
    <location>
        <begin position="1"/>
        <end position="150"/>
    </location>
</feature>
<reference key="1">
    <citation type="journal article" date="2004" name="Proc. Natl. Acad. Sci. U.S.A.">
        <title>Genomic plasticity of the causative agent of melioidosis, Burkholderia pseudomallei.</title>
        <authorList>
            <person name="Holden M.T.G."/>
            <person name="Titball R.W."/>
            <person name="Peacock S.J."/>
            <person name="Cerdeno-Tarraga A.-M."/>
            <person name="Atkins T."/>
            <person name="Crossman L.C."/>
            <person name="Pitt T."/>
            <person name="Churcher C."/>
            <person name="Mungall K.L."/>
            <person name="Bentley S.D."/>
            <person name="Sebaihia M."/>
            <person name="Thomson N.R."/>
            <person name="Bason N."/>
            <person name="Beacham I.R."/>
            <person name="Brooks K."/>
            <person name="Brown K.A."/>
            <person name="Brown N.F."/>
            <person name="Challis G.L."/>
            <person name="Cherevach I."/>
            <person name="Chillingworth T."/>
            <person name="Cronin A."/>
            <person name="Crossett B."/>
            <person name="Davis P."/>
            <person name="DeShazer D."/>
            <person name="Feltwell T."/>
            <person name="Fraser A."/>
            <person name="Hance Z."/>
            <person name="Hauser H."/>
            <person name="Holroyd S."/>
            <person name="Jagels K."/>
            <person name="Keith K.E."/>
            <person name="Maddison M."/>
            <person name="Moule S."/>
            <person name="Price C."/>
            <person name="Quail M.A."/>
            <person name="Rabbinowitsch E."/>
            <person name="Rutherford K."/>
            <person name="Sanders M."/>
            <person name="Simmonds M."/>
            <person name="Songsivilai S."/>
            <person name="Stevens K."/>
            <person name="Tumapa S."/>
            <person name="Vesaratchavest M."/>
            <person name="Whitehead S."/>
            <person name="Yeats C."/>
            <person name="Barrell B.G."/>
            <person name="Oyston P.C.F."/>
            <person name="Parkhill J."/>
        </authorList>
    </citation>
    <scope>NUCLEOTIDE SEQUENCE [LARGE SCALE GENOMIC DNA]</scope>
    <source>
        <strain>K96243</strain>
    </source>
</reference>
<protein>
    <recommendedName>
        <fullName evidence="1">Large ribosomal subunit protein bL9</fullName>
    </recommendedName>
    <alternativeName>
        <fullName evidence="2">50S ribosomal protein L9</fullName>
    </alternativeName>
</protein>